<organism>
    <name type="scientific">Chlamydomonas reinhardtii</name>
    <name type="common">Chlamydomonas smithii</name>
    <dbReference type="NCBI Taxonomy" id="3055"/>
    <lineage>
        <taxon>Eukaryota</taxon>
        <taxon>Viridiplantae</taxon>
        <taxon>Chlorophyta</taxon>
        <taxon>core chlorophytes</taxon>
        <taxon>Chlorophyceae</taxon>
        <taxon>CS clade</taxon>
        <taxon>Chlamydomonadales</taxon>
        <taxon>Chlamydomonadaceae</taxon>
        <taxon>Chlamydomonas</taxon>
    </lineage>
</organism>
<name>SFAS_CHLRE</name>
<dbReference type="EMBL" id="U56982">
    <property type="protein sequence ID" value="AAB03789.1"/>
    <property type="molecule type" value="mRNA"/>
</dbReference>
<dbReference type="PIR" id="T08178">
    <property type="entry name" value="T08178"/>
</dbReference>
<dbReference type="RefSeq" id="XP_001690415.1">
    <property type="nucleotide sequence ID" value="XM_001690363.1"/>
</dbReference>
<dbReference type="RefSeq" id="XP_042922787.1">
    <property type="nucleotide sequence ID" value="XM_043064219.1"/>
</dbReference>
<dbReference type="SMR" id="Q39618"/>
<dbReference type="PaxDb" id="3055-EDP05674"/>
<dbReference type="EnsemblPlants" id="PNW80868">
    <property type="protein sequence ID" value="PNW80868"/>
    <property type="gene ID" value="CHLRE_07g332950v5"/>
</dbReference>
<dbReference type="GeneID" id="5716135"/>
<dbReference type="Gramene" id="PNW80868">
    <property type="protein sequence ID" value="PNW80868"/>
    <property type="gene ID" value="CHLRE_07g332950v5"/>
</dbReference>
<dbReference type="eggNOG" id="ENOG502SAJZ">
    <property type="taxonomic scope" value="Eukaryota"/>
</dbReference>
<dbReference type="HOGENOM" id="CLU_088417_0_0_1"/>
<dbReference type="OMA" id="QNYCDEQ"/>
<dbReference type="OrthoDB" id="436841at2759"/>
<dbReference type="GO" id="GO:0005737">
    <property type="term" value="C:cytoplasm"/>
    <property type="evidence" value="ECO:0007669"/>
    <property type="project" value="UniProtKB-KW"/>
</dbReference>
<dbReference type="GO" id="GO:0005874">
    <property type="term" value="C:microtubule"/>
    <property type="evidence" value="ECO:0007669"/>
    <property type="project" value="UniProtKB-KW"/>
</dbReference>
<dbReference type="GO" id="GO:0005200">
    <property type="term" value="F:structural constituent of cytoskeleton"/>
    <property type="evidence" value="ECO:0007669"/>
    <property type="project" value="InterPro"/>
</dbReference>
<dbReference type="InterPro" id="IPR008374">
    <property type="entry name" value="SF_assemblin/giardin_b"/>
</dbReference>
<dbReference type="PANTHER" id="PTHR40412">
    <property type="entry name" value="SF-ASSEMBLIN"/>
    <property type="match status" value="1"/>
</dbReference>
<dbReference type="PANTHER" id="PTHR40412:SF1">
    <property type="entry name" value="SF-ASSEMBLIN"/>
    <property type="match status" value="1"/>
</dbReference>
<dbReference type="Pfam" id="PF06705">
    <property type="entry name" value="SF-assemblin"/>
    <property type="match status" value="1"/>
</dbReference>
<dbReference type="PRINTS" id="PR01799">
    <property type="entry name" value="SFASSEMBLIN"/>
</dbReference>
<reference key="1">
    <citation type="journal article" date="1997" name="Cell Motil. Cytoskeleton">
        <title>SF-assemblin in Chlamydomonas: sequence conservation and localization during the cell cycle.</title>
        <authorList>
            <person name="Lechtreck K.-F."/>
            <person name="Silflow C."/>
        </authorList>
    </citation>
    <scope>NUCLEOTIDE SEQUENCE [MRNA]</scope>
    <source>
        <strain>A55</strain>
    </source>
</reference>
<accession>Q39618</accession>
<evidence type="ECO:0000250" key="1"/>
<evidence type="ECO:0000255" key="2"/>
<evidence type="ECO:0000256" key="3">
    <source>
        <dbReference type="SAM" id="MobiDB-lite"/>
    </source>
</evidence>
<evidence type="ECO:0000305" key="4"/>
<sequence>MSLRPFETPGGLSSLSPRRRDFSPTRPGTNGPSAKLEHVTERFAGLWTDLEQEKQNKRIQESTRFSLLQESLQRIEKSVEAEVKRRAESDKQLQSHFEGEIKTLQERQLQQFTDLQLALKSAVESLNQRITDLHALVRDERESRRSDIEHLATSLVGKVNECVAAIDEERNGRVQEQTVSMKRVGEDLMLLSQRLDTEKNTRDSEVSALRAEVHDAIGNRNLADDQFKGAVLDEVAGLKAALALEREERIAEDDEIVQAVNDYTKALQEGLKLVSA</sequence>
<proteinExistence type="evidence at transcript level"/>
<keyword id="KW-0175">Coiled coil</keyword>
<keyword id="KW-0963">Cytoplasm</keyword>
<keyword id="KW-0206">Cytoskeleton</keyword>
<keyword id="KW-0493">Microtubule</keyword>
<comment type="function">
    <text>Major component of the striated microtubule-associated fibers (SMAFs; system-I-fibers).</text>
</comment>
<comment type="subcellular location">
    <subcellularLocation>
        <location>Cytoplasm</location>
        <location>Cytoskeleton</location>
    </subcellularLocation>
</comment>
<comment type="domain">
    <text evidence="1">Consists of a small non-helical N-terminal domain and a rod domain with a 29 residue repeat pattern based on four heptads followed by a skip residue. This alpha-helical protein is characterized by the ability to form a special segmented coiled coil and to assemble into striated fibers of 2 nm protofilaments (By similarity).</text>
</comment>
<comment type="similarity">
    <text evidence="4">Belongs to the SF-assemblin family.</text>
</comment>
<feature type="chain" id="PRO_0000221441" description="SF-assemblin">
    <location>
        <begin position="1"/>
        <end position="276"/>
    </location>
</feature>
<feature type="region of interest" description="Disordered" evidence="3">
    <location>
        <begin position="1"/>
        <end position="37"/>
    </location>
</feature>
<feature type="region of interest" description="Nonhelical region">
    <location>
        <begin position="1"/>
        <end position="31"/>
    </location>
</feature>
<feature type="region of interest" description="Rod">
    <location>
        <begin position="32"/>
        <end position="276"/>
    </location>
</feature>
<feature type="coiled-coil region" evidence="2">
    <location>
        <begin position="67"/>
        <end position="145"/>
    </location>
</feature>
<protein>
    <recommendedName>
        <fullName>SF-assemblin</fullName>
    </recommendedName>
</protein>